<proteinExistence type="inferred from homology"/>
<sequence length="114" mass="12793">MHELGITQNIVAIVLEQARGASVKRVTLEIGKLSAIMPEAIRFCFDICCQDTLLEGVTLEIIETEGKGKCRHCGHEIRLSQPFGQCDRCDSFELDIIQGQELQIKEMEVEELCV</sequence>
<evidence type="ECO:0000255" key="1">
    <source>
        <dbReference type="HAMAP-Rule" id="MF_00213"/>
    </source>
</evidence>
<keyword id="KW-0479">Metal-binding</keyword>
<keyword id="KW-0533">Nickel</keyword>
<keyword id="KW-1185">Reference proteome</keyword>
<keyword id="KW-0862">Zinc</keyword>
<reference key="1">
    <citation type="journal article" date="2008" name="Proc. Natl. Acad. Sci. U.S.A.">
        <title>The genome of Cyanothece 51142, a unicellular diazotrophic cyanobacterium important in the marine nitrogen cycle.</title>
        <authorList>
            <person name="Welsh E.A."/>
            <person name="Liberton M."/>
            <person name="Stoeckel J."/>
            <person name="Loh T."/>
            <person name="Elvitigala T."/>
            <person name="Wang C."/>
            <person name="Wollam A."/>
            <person name="Fulton R.S."/>
            <person name="Clifton S.W."/>
            <person name="Jacobs J.M."/>
            <person name="Aurora R."/>
            <person name="Ghosh B.K."/>
            <person name="Sherman L.A."/>
            <person name="Smith R.D."/>
            <person name="Wilson R.K."/>
            <person name="Pakrasi H.B."/>
        </authorList>
    </citation>
    <scope>NUCLEOTIDE SEQUENCE [LARGE SCALE GENOMIC DNA]</scope>
    <source>
        <strain>ATCC 51142 / BH68</strain>
    </source>
</reference>
<accession>B1WV53</accession>
<feature type="chain" id="PRO_1000099890" description="Hydrogenase maturation factor HypA">
    <location>
        <begin position="1"/>
        <end position="114"/>
    </location>
</feature>
<feature type="binding site" evidence="1">
    <location>
        <position position="2"/>
    </location>
    <ligand>
        <name>Ni(2+)</name>
        <dbReference type="ChEBI" id="CHEBI:49786"/>
    </ligand>
</feature>
<feature type="binding site" evidence="1">
    <location>
        <position position="70"/>
    </location>
    <ligand>
        <name>Zn(2+)</name>
        <dbReference type="ChEBI" id="CHEBI:29105"/>
    </ligand>
</feature>
<feature type="binding site" evidence="1">
    <location>
        <position position="73"/>
    </location>
    <ligand>
        <name>Zn(2+)</name>
        <dbReference type="ChEBI" id="CHEBI:29105"/>
    </ligand>
</feature>
<feature type="binding site" evidence="1">
    <location>
        <position position="86"/>
    </location>
    <ligand>
        <name>Zn(2+)</name>
        <dbReference type="ChEBI" id="CHEBI:29105"/>
    </ligand>
</feature>
<feature type="binding site" evidence="1">
    <location>
        <position position="89"/>
    </location>
    <ligand>
        <name>Zn(2+)</name>
        <dbReference type="ChEBI" id="CHEBI:29105"/>
    </ligand>
</feature>
<dbReference type="EMBL" id="CP000806">
    <property type="protein sequence ID" value="ACB52250.1"/>
    <property type="molecule type" value="Genomic_DNA"/>
</dbReference>
<dbReference type="RefSeq" id="WP_009547364.1">
    <property type="nucleotide sequence ID" value="NC_010546.1"/>
</dbReference>
<dbReference type="SMR" id="B1WV53"/>
<dbReference type="STRING" id="43989.cce_2902"/>
<dbReference type="KEGG" id="cyt:cce_2902"/>
<dbReference type="eggNOG" id="COG0375">
    <property type="taxonomic scope" value="Bacteria"/>
</dbReference>
<dbReference type="HOGENOM" id="CLU_126929_3_0_3"/>
<dbReference type="OrthoDB" id="9800361at2"/>
<dbReference type="Proteomes" id="UP000001203">
    <property type="component" value="Chromosome circular"/>
</dbReference>
<dbReference type="GO" id="GO:0016151">
    <property type="term" value="F:nickel cation binding"/>
    <property type="evidence" value="ECO:0007669"/>
    <property type="project" value="UniProtKB-UniRule"/>
</dbReference>
<dbReference type="GO" id="GO:0008270">
    <property type="term" value="F:zinc ion binding"/>
    <property type="evidence" value="ECO:0007669"/>
    <property type="project" value="UniProtKB-UniRule"/>
</dbReference>
<dbReference type="GO" id="GO:0051604">
    <property type="term" value="P:protein maturation"/>
    <property type="evidence" value="ECO:0007669"/>
    <property type="project" value="InterPro"/>
</dbReference>
<dbReference type="GO" id="GO:0036211">
    <property type="term" value="P:protein modification process"/>
    <property type="evidence" value="ECO:0007669"/>
    <property type="project" value="UniProtKB-UniRule"/>
</dbReference>
<dbReference type="Gene3D" id="3.30.2320.80">
    <property type="match status" value="1"/>
</dbReference>
<dbReference type="HAMAP" id="MF_00213">
    <property type="entry name" value="HypA_HybF"/>
    <property type="match status" value="1"/>
</dbReference>
<dbReference type="InterPro" id="IPR000688">
    <property type="entry name" value="HypA/HybF"/>
</dbReference>
<dbReference type="NCBIfam" id="TIGR00100">
    <property type="entry name" value="hypA"/>
    <property type="match status" value="1"/>
</dbReference>
<dbReference type="PANTHER" id="PTHR34535">
    <property type="entry name" value="HYDROGENASE MATURATION FACTOR HYPA"/>
    <property type="match status" value="1"/>
</dbReference>
<dbReference type="PANTHER" id="PTHR34535:SF3">
    <property type="entry name" value="HYDROGENASE MATURATION FACTOR HYPA"/>
    <property type="match status" value="1"/>
</dbReference>
<dbReference type="Pfam" id="PF01155">
    <property type="entry name" value="HypA"/>
    <property type="match status" value="1"/>
</dbReference>
<dbReference type="PIRSF" id="PIRSF004761">
    <property type="entry name" value="Hydrgn_mat_HypA"/>
    <property type="match status" value="1"/>
</dbReference>
<name>HYPA_CROS5</name>
<protein>
    <recommendedName>
        <fullName evidence="1">Hydrogenase maturation factor HypA</fullName>
    </recommendedName>
</protein>
<comment type="function">
    <text evidence="1">Involved in the maturation of [NiFe] hydrogenases. Required for nickel insertion into the metal center of the hydrogenase.</text>
</comment>
<comment type="similarity">
    <text evidence="1">Belongs to the HypA/HybF family.</text>
</comment>
<gene>
    <name evidence="1" type="primary">hypA</name>
    <name type="ordered locus">cce_2902</name>
</gene>
<organism>
    <name type="scientific">Crocosphaera subtropica (strain ATCC 51142 / BH68)</name>
    <name type="common">Cyanothece sp. (strain ATCC 51142)</name>
    <dbReference type="NCBI Taxonomy" id="43989"/>
    <lineage>
        <taxon>Bacteria</taxon>
        <taxon>Bacillati</taxon>
        <taxon>Cyanobacteriota</taxon>
        <taxon>Cyanophyceae</taxon>
        <taxon>Oscillatoriophycideae</taxon>
        <taxon>Chroococcales</taxon>
        <taxon>Aphanothecaceae</taxon>
        <taxon>Crocosphaera</taxon>
        <taxon>Crocosphaera subtropica</taxon>
    </lineage>
</organism>